<protein>
    <recommendedName>
        <fullName>NAD(P)H dehydrogenase (quinone)</fullName>
        <ecNumber>1.6.5.2</ecNumber>
    </recommendedName>
    <alternativeName>
        <fullName>NAD(P)H quinone reductase</fullName>
    </alternativeName>
    <alternativeName>
        <fullName>NAD(P)H: menadione oxidoreductase</fullName>
    </alternativeName>
    <alternativeName>
        <fullName>NADH-menadione reductase</fullName>
    </alternativeName>
</protein>
<evidence type="ECO:0000269" key="1">
    <source>
    </source>
</evidence>
<evidence type="ECO:0000269" key="2">
    <source>
    </source>
</evidence>
<evidence type="ECO:0000305" key="3"/>
<evidence type="ECO:0007829" key="4">
    <source>
        <dbReference type="PDB" id="1XDI"/>
    </source>
</evidence>
<reference key="1">
    <citation type="journal article" date="1998" name="Nature">
        <title>Deciphering the biology of Mycobacterium tuberculosis from the complete genome sequence.</title>
        <authorList>
            <person name="Cole S.T."/>
            <person name="Brosch R."/>
            <person name="Parkhill J."/>
            <person name="Garnier T."/>
            <person name="Churcher C.M."/>
            <person name="Harris D.E."/>
            <person name="Gordon S.V."/>
            <person name="Eiglmeier K."/>
            <person name="Gas S."/>
            <person name="Barry C.E. III"/>
            <person name="Tekaia F."/>
            <person name="Badcock K."/>
            <person name="Basham D."/>
            <person name="Brown D."/>
            <person name="Chillingworth T."/>
            <person name="Connor R."/>
            <person name="Davies R.M."/>
            <person name="Devlin K."/>
            <person name="Feltwell T."/>
            <person name="Gentles S."/>
            <person name="Hamlin N."/>
            <person name="Holroyd S."/>
            <person name="Hornsby T."/>
            <person name="Jagels K."/>
            <person name="Krogh A."/>
            <person name="McLean J."/>
            <person name="Moule S."/>
            <person name="Murphy L.D."/>
            <person name="Oliver S."/>
            <person name="Osborne J."/>
            <person name="Quail M.A."/>
            <person name="Rajandream M.A."/>
            <person name="Rogers J."/>
            <person name="Rutter S."/>
            <person name="Seeger K."/>
            <person name="Skelton S."/>
            <person name="Squares S."/>
            <person name="Squares R."/>
            <person name="Sulston J.E."/>
            <person name="Taylor K."/>
            <person name="Whitehead S."/>
            <person name="Barrell B.G."/>
        </authorList>
    </citation>
    <scope>NUCLEOTIDE SEQUENCE [LARGE SCALE GENOMIC DNA]</scope>
    <source>
        <strain>ATCC 25618 / H37Rv</strain>
    </source>
</reference>
<reference key="2">
    <citation type="journal article" date="2006" name="Microbes Infect.">
        <title>Rv3303c of Mycobacterium tuberculosis protects tubercle bacilli against oxidative stress in vivo and contributes to virulence in mice.</title>
        <authorList>
            <person name="Akhtar P."/>
            <person name="Srivastava S."/>
            <person name="Srivastava A."/>
            <person name="Srivastava M."/>
            <person name="Srivastava B.S."/>
            <person name="Srivastava R."/>
        </authorList>
    </citation>
    <scope>FUNCTION</scope>
    <scope>BIOPHYSICOCHEMICAL PROPERTIES</scope>
</reference>
<reference key="3">
    <citation type="journal article" date="2008" name="BMC Syst. Biol.">
        <title>targetTB: a target identification pipeline for Mycobacterium tuberculosis through an interactome, reactome and genome-scale structural analysis.</title>
        <authorList>
            <person name="Raman K."/>
            <person name="Yeturu K."/>
            <person name="Chandra N."/>
        </authorList>
    </citation>
    <scope>IDENTIFICATION AS A DRUG TARGET [LARGE SCALE ANALYSIS]</scope>
</reference>
<reference key="4">
    <citation type="journal article" date="2011" name="Mol. Cell. Proteomics">
        <title>Proteogenomic analysis of Mycobacterium tuberculosis by high resolution mass spectrometry.</title>
        <authorList>
            <person name="Kelkar D.S."/>
            <person name="Kumar D."/>
            <person name="Kumar P."/>
            <person name="Balakrishnan L."/>
            <person name="Muthusamy B."/>
            <person name="Yadav A.K."/>
            <person name="Shrivastava P."/>
            <person name="Marimuthu A."/>
            <person name="Anand S."/>
            <person name="Sundaram H."/>
            <person name="Kingsbury R."/>
            <person name="Harsha H.C."/>
            <person name="Nair B."/>
            <person name="Prasad T.S."/>
            <person name="Chauhan D.S."/>
            <person name="Katoch K."/>
            <person name="Katoch V.M."/>
            <person name="Kumar P."/>
            <person name="Chaerkady R."/>
            <person name="Ramachandran S."/>
            <person name="Dash D."/>
            <person name="Pandey A."/>
        </authorList>
    </citation>
    <scope>IDENTIFICATION BY MASS SPECTROMETRY [LARGE SCALE ANALYSIS]</scope>
    <source>
        <strain>ATCC 25618 / H37Rv</strain>
    </source>
</reference>
<reference key="5">
    <citation type="journal article" date="2004" name="J. Biol. Chem.">
        <title>Characterization of a new member of the flavoprotein disulfide reductase family of enzymes from Mycobacterium tuberculosis.</title>
        <authorList>
            <person name="Argyrou A."/>
            <person name="Vetting M.W."/>
            <person name="Blanchard J.S."/>
        </authorList>
    </citation>
    <scope>X-RAY CRYSTALLOGRAPHY (2.81 ANGSTROMS) IN COMPLEX WITH FAD</scope>
    <scope>MASS SPECTROMETRY</scope>
    <scope>FUNCTION</scope>
    <scope>SUBUNIT</scope>
    <scope>SUBSTRATE SPECIFICITY</scope>
    <scope>REACTION MECHANISM</scope>
    <scope>BIOPHYSICOCHEMICAL PROPERTIES</scope>
</reference>
<accession>P9WHH7</accession>
<accession>L0TC51</accession>
<accession>O53355</accession>
<accession>Q8VJ36</accession>
<keyword id="KW-0002">3D-structure</keyword>
<keyword id="KW-0274">FAD</keyword>
<keyword id="KW-0285">Flavoprotein</keyword>
<keyword id="KW-0520">NAD</keyword>
<keyword id="KW-0560">Oxidoreductase</keyword>
<keyword id="KW-1185">Reference proteome</keyword>
<name>LPDA_MYCTU</name>
<proteinExistence type="evidence at protein level"/>
<dbReference type="EC" id="1.6.5.2"/>
<dbReference type="EMBL" id="AL123456">
    <property type="protein sequence ID" value="CCP46122.1"/>
    <property type="molecule type" value="Genomic_DNA"/>
</dbReference>
<dbReference type="PIR" id="F70841">
    <property type="entry name" value="F70841"/>
</dbReference>
<dbReference type="RefSeq" id="NP_217820.1">
    <property type="nucleotide sequence ID" value="NC_000962.3"/>
</dbReference>
<dbReference type="RefSeq" id="WP_009936266.1">
    <property type="nucleotide sequence ID" value="NZ_NVQJ01000003.1"/>
</dbReference>
<dbReference type="PDB" id="1XDI">
    <property type="method" value="X-ray"/>
    <property type="resolution" value="2.81 A"/>
    <property type="chains" value="A/B=1-493"/>
</dbReference>
<dbReference type="PDBsum" id="1XDI"/>
<dbReference type="SMR" id="P9WHH7"/>
<dbReference type="STRING" id="83332.Rv3303c"/>
<dbReference type="DrugBank" id="DB03147">
    <property type="generic name" value="Flavin adenine dinucleotide"/>
</dbReference>
<dbReference type="PaxDb" id="83332-Rv3303c"/>
<dbReference type="DNASU" id="887659"/>
<dbReference type="GeneID" id="887659"/>
<dbReference type="KEGG" id="mtu:Rv3303c"/>
<dbReference type="KEGG" id="mtv:RVBD_3303c"/>
<dbReference type="TubercuList" id="Rv3303c"/>
<dbReference type="eggNOG" id="COG1249">
    <property type="taxonomic scope" value="Bacteria"/>
</dbReference>
<dbReference type="InParanoid" id="P9WHH7"/>
<dbReference type="OrthoDB" id="4678789at2"/>
<dbReference type="PhylomeDB" id="P9WHH7"/>
<dbReference type="SABIO-RK" id="P9WHH7"/>
<dbReference type="EvolutionaryTrace" id="P9WHH7"/>
<dbReference type="Proteomes" id="UP000001584">
    <property type="component" value="Chromosome"/>
</dbReference>
<dbReference type="GO" id="GO:0050660">
    <property type="term" value="F:flavin adenine dinucleotide binding"/>
    <property type="evidence" value="ECO:0000314"/>
    <property type="project" value="MTBBASE"/>
</dbReference>
<dbReference type="GO" id="GO:0003955">
    <property type="term" value="F:NAD(P)H dehydrogenase (quinone) activity"/>
    <property type="evidence" value="ECO:0000314"/>
    <property type="project" value="MTBBASE"/>
</dbReference>
<dbReference type="GO" id="GO:0050136">
    <property type="term" value="F:NADH:ubiquinone reductase (non-electrogenic) activity"/>
    <property type="evidence" value="ECO:0007669"/>
    <property type="project" value="RHEA"/>
</dbReference>
<dbReference type="GO" id="GO:0070401">
    <property type="term" value="F:NADP+ binding"/>
    <property type="evidence" value="ECO:0000314"/>
    <property type="project" value="MTBBASE"/>
</dbReference>
<dbReference type="GO" id="GO:0008753">
    <property type="term" value="F:NADPH dehydrogenase (quinone) activity"/>
    <property type="evidence" value="ECO:0007669"/>
    <property type="project" value="RHEA"/>
</dbReference>
<dbReference type="GO" id="GO:0016655">
    <property type="term" value="F:oxidoreductase activity, acting on NAD(P)H, quinone or similar compound as acceptor"/>
    <property type="evidence" value="ECO:0000314"/>
    <property type="project" value="MTBBASE"/>
</dbReference>
<dbReference type="GO" id="GO:1990748">
    <property type="term" value="P:cellular detoxification"/>
    <property type="evidence" value="ECO:0000315"/>
    <property type="project" value="MTBBASE"/>
</dbReference>
<dbReference type="FunFam" id="3.50.50.60:FF:000054">
    <property type="entry name" value="Flavoprotein disulfide reductase"/>
    <property type="match status" value="1"/>
</dbReference>
<dbReference type="Gene3D" id="3.30.390.30">
    <property type="match status" value="1"/>
</dbReference>
<dbReference type="Gene3D" id="3.50.50.60">
    <property type="entry name" value="FAD/NAD(P)-binding domain"/>
    <property type="match status" value="2"/>
</dbReference>
<dbReference type="InterPro" id="IPR036188">
    <property type="entry name" value="FAD/NAD-bd_sf"/>
</dbReference>
<dbReference type="InterPro" id="IPR023753">
    <property type="entry name" value="FAD/NAD-binding_dom"/>
</dbReference>
<dbReference type="InterPro" id="IPR016156">
    <property type="entry name" value="FAD/NAD-linked_Rdtase_dimer_sf"/>
</dbReference>
<dbReference type="InterPro" id="IPR001100">
    <property type="entry name" value="Pyr_nuc-diS_OxRdtase"/>
</dbReference>
<dbReference type="InterPro" id="IPR004099">
    <property type="entry name" value="Pyr_nucl-diS_OxRdtase_dimer"/>
</dbReference>
<dbReference type="NCBIfam" id="NF005883">
    <property type="entry name" value="PRK07845.1"/>
    <property type="match status" value="1"/>
</dbReference>
<dbReference type="PANTHER" id="PTHR43014">
    <property type="entry name" value="MERCURIC REDUCTASE"/>
    <property type="match status" value="1"/>
</dbReference>
<dbReference type="PANTHER" id="PTHR43014:SF1">
    <property type="entry name" value="NAD(P)H DEHYDROGENASE (QUINONE)"/>
    <property type="match status" value="1"/>
</dbReference>
<dbReference type="Pfam" id="PF07992">
    <property type="entry name" value="Pyr_redox_2"/>
    <property type="match status" value="1"/>
</dbReference>
<dbReference type="Pfam" id="PF02852">
    <property type="entry name" value="Pyr_redox_dim"/>
    <property type="match status" value="1"/>
</dbReference>
<dbReference type="PIRSF" id="PIRSF000350">
    <property type="entry name" value="Mercury_reductase_MerA"/>
    <property type="match status" value="1"/>
</dbReference>
<dbReference type="PRINTS" id="PR00368">
    <property type="entry name" value="FADPNR"/>
</dbReference>
<dbReference type="PRINTS" id="PR00411">
    <property type="entry name" value="PNDRDTASEI"/>
</dbReference>
<dbReference type="SUPFAM" id="SSF51905">
    <property type="entry name" value="FAD/NAD(P)-binding domain"/>
    <property type="match status" value="1"/>
</dbReference>
<dbReference type="SUPFAM" id="SSF55424">
    <property type="entry name" value="FAD/NAD-linked reductases, dimerisation (C-terminal) domain"/>
    <property type="match status" value="1"/>
</dbReference>
<organism>
    <name type="scientific">Mycobacterium tuberculosis (strain ATCC 25618 / H37Rv)</name>
    <dbReference type="NCBI Taxonomy" id="83332"/>
    <lineage>
        <taxon>Bacteria</taxon>
        <taxon>Bacillati</taxon>
        <taxon>Actinomycetota</taxon>
        <taxon>Actinomycetes</taxon>
        <taxon>Mycobacteriales</taxon>
        <taxon>Mycobacteriaceae</taxon>
        <taxon>Mycobacterium</taxon>
        <taxon>Mycobacterium tuberculosis complex</taxon>
    </lineage>
</organism>
<gene>
    <name type="primary">lpdA</name>
    <name type="synonym">lpdA-2</name>
    <name type="ordered locus">Rv3303c</name>
</gene>
<feature type="chain" id="PRO_0000391461" description="NAD(P)H dehydrogenase (quinone)">
    <location>
        <begin position="1"/>
        <end position="493"/>
    </location>
</feature>
<feature type="binding site" evidence="1">
    <location>
        <begin position="12"/>
        <end position="13"/>
    </location>
    <ligand>
        <name>FAD</name>
        <dbReference type="ChEBI" id="CHEBI:57692"/>
    </ligand>
</feature>
<feature type="binding site" evidence="1">
    <location>
        <begin position="35"/>
        <end position="37"/>
    </location>
    <ligand>
        <name>FAD</name>
        <dbReference type="ChEBI" id="CHEBI:57692"/>
    </ligand>
</feature>
<feature type="binding site" evidence="1">
    <location>
        <begin position="42"/>
        <end position="43"/>
    </location>
    <ligand>
        <name>FAD</name>
        <dbReference type="ChEBI" id="CHEBI:57692"/>
    </ligand>
</feature>
<feature type="binding site" evidence="1">
    <location>
        <position position="52"/>
    </location>
    <ligand>
        <name>FAD</name>
        <dbReference type="ChEBI" id="CHEBI:57692"/>
    </ligand>
</feature>
<feature type="binding site" evidence="1">
    <location>
        <position position="117"/>
    </location>
    <ligand>
        <name>FAD</name>
        <dbReference type="ChEBI" id="CHEBI:57692"/>
    </ligand>
</feature>
<feature type="binding site" evidence="1">
    <location>
        <position position="317"/>
    </location>
    <ligand>
        <name>FAD</name>
        <dbReference type="ChEBI" id="CHEBI:57692"/>
    </ligand>
</feature>
<feature type="binding site" evidence="1">
    <location>
        <begin position="324"/>
        <end position="325"/>
    </location>
    <ligand>
        <name>FAD</name>
        <dbReference type="ChEBI" id="CHEBI:57692"/>
    </ligand>
</feature>
<feature type="binding site" evidence="1">
    <location>
        <position position="450"/>
    </location>
    <ligand>
        <name>FAD</name>
        <dbReference type="ChEBI" id="CHEBI:57692"/>
    </ligand>
</feature>
<feature type="strand" evidence="4">
    <location>
        <begin position="3"/>
        <end position="8"/>
    </location>
</feature>
<feature type="helix" evidence="4">
    <location>
        <begin position="12"/>
        <end position="24"/>
    </location>
</feature>
<feature type="turn" evidence="4">
    <location>
        <begin position="26"/>
        <end position="28"/>
    </location>
</feature>
<feature type="strand" evidence="4">
    <location>
        <begin position="29"/>
        <end position="37"/>
    </location>
</feature>
<feature type="helix" evidence="4">
    <location>
        <begin position="41"/>
        <end position="45"/>
    </location>
</feature>
<feature type="helix" evidence="4">
    <location>
        <begin position="48"/>
        <end position="64"/>
    </location>
</feature>
<feature type="turn" evidence="4">
    <location>
        <begin position="65"/>
        <end position="71"/>
    </location>
</feature>
<feature type="helix" evidence="4">
    <location>
        <begin position="83"/>
        <end position="107"/>
    </location>
</feature>
<feature type="strand" evidence="4">
    <location>
        <begin position="111"/>
        <end position="119"/>
    </location>
</feature>
<feature type="strand" evidence="4">
    <location>
        <begin position="122"/>
        <end position="124"/>
    </location>
</feature>
<feature type="strand" evidence="4">
    <location>
        <begin position="127"/>
        <end position="134"/>
    </location>
</feature>
<feature type="strand" evidence="4">
    <location>
        <begin position="140"/>
        <end position="150"/>
    </location>
</feature>
<feature type="strand" evidence="4">
    <location>
        <begin position="154"/>
        <end position="156"/>
    </location>
</feature>
<feature type="helix" evidence="4">
    <location>
        <begin position="160"/>
        <end position="162"/>
    </location>
</feature>
<feature type="strand" evidence="4">
    <location>
        <begin position="166"/>
        <end position="171"/>
    </location>
</feature>
<feature type="helix" evidence="4">
    <location>
        <begin position="172"/>
        <end position="177"/>
    </location>
</feature>
<feature type="strand" evidence="4">
    <location>
        <begin position="183"/>
        <end position="189"/>
    </location>
</feature>
<feature type="helix" evidence="4">
    <location>
        <begin position="192"/>
        <end position="203"/>
    </location>
</feature>
<feature type="strand" evidence="4">
    <location>
        <begin position="208"/>
        <end position="211"/>
    </location>
</feature>
<feature type="strand" evidence="4">
    <location>
        <begin position="213"/>
        <end position="218"/>
    </location>
</feature>
<feature type="helix" evidence="4">
    <location>
        <begin position="223"/>
        <end position="235"/>
    </location>
</feature>
<feature type="strand" evidence="4">
    <location>
        <begin position="239"/>
        <end position="241"/>
    </location>
</feature>
<feature type="strand" evidence="4">
    <location>
        <begin position="246"/>
        <end position="251"/>
    </location>
</feature>
<feature type="strand" evidence="4">
    <location>
        <begin position="253"/>
        <end position="260"/>
    </location>
</feature>
<feature type="strand" evidence="4">
    <location>
        <begin position="265"/>
        <end position="273"/>
    </location>
</feature>
<feature type="strand" evidence="4">
    <location>
        <begin position="277"/>
        <end position="279"/>
    </location>
</feature>
<feature type="strand" evidence="4">
    <location>
        <begin position="282"/>
        <end position="284"/>
    </location>
</feature>
<feature type="turn" evidence="4">
    <location>
        <begin position="286"/>
        <end position="290"/>
    </location>
</feature>
<feature type="turn" evidence="4">
    <location>
        <begin position="295"/>
        <end position="297"/>
    </location>
</feature>
<feature type="strand" evidence="4">
    <location>
        <begin position="303"/>
        <end position="306"/>
    </location>
</feature>
<feature type="strand" evidence="4">
    <location>
        <begin position="312"/>
        <end position="314"/>
    </location>
</feature>
<feature type="helix" evidence="4">
    <location>
        <begin position="317"/>
        <end position="319"/>
    </location>
</feature>
<feature type="helix" evidence="4">
    <location>
        <begin position="325"/>
        <end position="339"/>
    </location>
</feature>
<feature type="helix" evidence="4">
    <location>
        <begin position="349"/>
        <end position="351"/>
    </location>
</feature>
<feature type="strand" evidence="4">
    <location>
        <begin position="353"/>
        <end position="356"/>
    </location>
</feature>
<feature type="strand" evidence="4">
    <location>
        <begin position="358"/>
        <end position="367"/>
    </location>
</feature>
<feature type="helix" evidence="4">
    <location>
        <begin position="369"/>
        <end position="373"/>
    </location>
</feature>
<feature type="strand" evidence="4">
    <location>
        <begin position="379"/>
        <end position="386"/>
    </location>
</feature>
<feature type="helix" evidence="4">
    <location>
        <begin position="390"/>
        <end position="394"/>
    </location>
</feature>
<feature type="strand" evidence="4">
    <location>
        <begin position="401"/>
        <end position="407"/>
    </location>
</feature>
<feature type="turn" evidence="4">
    <location>
        <begin position="408"/>
        <end position="410"/>
    </location>
</feature>
<feature type="strand" evidence="4">
    <location>
        <begin position="412"/>
        <end position="420"/>
    </location>
</feature>
<feature type="helix" evidence="4">
    <location>
        <begin position="423"/>
        <end position="436"/>
    </location>
</feature>
<feature type="helix" evidence="4">
    <location>
        <begin position="440"/>
        <end position="444"/>
    </location>
</feature>
<feature type="strand" evidence="4">
    <location>
        <begin position="450"/>
        <end position="452"/>
    </location>
</feature>
<feature type="helix" evidence="4">
    <location>
        <begin position="454"/>
        <end position="464"/>
    </location>
</feature>
<sequence length="493" mass="51489">MVTRIVILGGGPAGYEAALVAATSHPETTQVTVIDCDGIGGAAVLDDCVPSKTFIASTGLRTELRRAPHLGFHIDFDDAKISLPQIHARVKTLAAAQSADITAQLLSMGVQVIAGRGELIDSTPGLARHRIKATAADGSTSEHEADVVLVATGASPRILPSAQPDGERILTWRQLYDLDALPDHLIVVGSGVTGAEFVDAYTELGVPVTVVASQDHVLPYEDADAALVLEESFAERGVRLFKNARAASVTRTGAGVLVTMTDGRTVEGSHALMTIGSVPNTSGLGLERVGIQLGRGNYLTVDRVSRTLATGIYAAGDCTGLLPLASVAAMQGRIAMYHALGEGVSPIRLRTVAATVFTRPEIAAVGVPQSVIDAGSVAARTIMLPLRTNARAKMSEMRHGFVKIFCRRSTGVVIGGVVVAPIASELILPIAVAVQNRITVNELAQTLAVYPSLSGSITEAARRLMAHDDLDCTAAQDAAEQLALVPHHLPTSN</sequence>
<comment type="function">
    <text evidence="1 2">May contribute to virulence by increasing resistance to reactive oxygen intermediates. It can reduce 2,6-dimethyl-1,4-benzoquinone (DMBQ), 5-hydroxy-1,4-naphthaquinone (5-HNQ) and menadione. NADPH is the physiological reductant rather than NADH.</text>
</comment>
<comment type="catalytic activity">
    <reaction>
        <text>a quinone + NADH + H(+) = a quinol + NAD(+)</text>
        <dbReference type="Rhea" id="RHEA:46160"/>
        <dbReference type="ChEBI" id="CHEBI:15378"/>
        <dbReference type="ChEBI" id="CHEBI:24646"/>
        <dbReference type="ChEBI" id="CHEBI:57540"/>
        <dbReference type="ChEBI" id="CHEBI:57945"/>
        <dbReference type="ChEBI" id="CHEBI:132124"/>
        <dbReference type="EC" id="1.6.5.2"/>
    </reaction>
</comment>
<comment type="catalytic activity">
    <reaction>
        <text>a quinone + NADPH + H(+) = a quinol + NADP(+)</text>
        <dbReference type="Rhea" id="RHEA:46164"/>
        <dbReference type="ChEBI" id="CHEBI:15378"/>
        <dbReference type="ChEBI" id="CHEBI:24646"/>
        <dbReference type="ChEBI" id="CHEBI:57783"/>
        <dbReference type="ChEBI" id="CHEBI:58349"/>
        <dbReference type="ChEBI" id="CHEBI:132124"/>
        <dbReference type="EC" id="1.6.5.2"/>
    </reaction>
</comment>
<comment type="cofactor">
    <cofactor>
        <name>FAD</name>
        <dbReference type="ChEBI" id="CHEBI:57692"/>
    </cofactor>
    <text>Binds 1 FAD per subunit.</text>
</comment>
<comment type="biophysicochemical properties">
    <kinetics>
        <KM evidence="1 2">0.39 uM for 5-HNQ (with NADPH at pH 7.5 and at 25 degrees Celsius)</KM>
        <KM evidence="1 2">0.44 uM for NADPH (with 5-HNQ at pH 7.5 and at 25 degrees Celsius)</KM>
        <KM evidence="1 2">0.53 uM for NADPH (with DMBQ at pH 7.5 and at 25 degrees Celsius)</KM>
        <KM evidence="1 2">1.6 uM for DMBQ (with NADPH at pH 7.5 and at 25 degrees Celsius)</KM>
        <KM evidence="1 2">5.4 uM for oxidized thionicotinamide adenine dinucleotide (thio_NAD)(with NADH at pH 7.5 and at 25 degrees Celsius)</KM>
        <KM evidence="1 2">5.5 uM for 5-HNQ (with NADH at pH 7.5 and at 25 degrees Celsius)</KM>
        <KM evidence="1 2">11 uM for DMBQ (with NADH at pH 7.5 and at 25 degrees Celsius)</KM>
        <KM evidence="1 2">18 uM for oxidized thionicotinamide adenine dinucleotide (thio_NAD)(with NADPH at pH 7.5 and at 25 degrees Celsius)</KM>
        <KM evidence="1 2">28 uM for NADH (with 5-HNQ at pH 7.5 and at 25 degrees Celsius)</KM>
        <KM evidence="1 2">35.7 uM for menadione (at pH 7.5)</KM>
        <KM evidence="1 2">36 uM for NADH (with DMBQ at pH 7.5 and at 25 degrees Celsius)</KM>
        <Vmax evidence="1 2">20.0 umol/min/mg enzyme with menadione (at pH 7.5)</Vmax>
    </kinetics>
</comment>
<comment type="subunit">
    <text evidence="1">Homotetramer.</text>
</comment>
<comment type="mass spectrometry" mass="52543.0" error="3.0" method="Electrospray" evidence="1"/>
<comment type="miscellaneous">
    <text>Catalysis proceeds by a classical ping-pong bi-bi reaction mechanism.</text>
</comment>
<comment type="miscellaneous">
    <text>Was identified as a high-confidence drug target.</text>
</comment>
<comment type="similarity">
    <text evidence="3">Belongs to the class-I pyridine nucleotide-disulfide oxidoreductase family.</text>
</comment>
<comment type="caution">
    <text evidence="3">Despite significant sequence similarity to lipoamide dehydrogenases this protein cannot catalyze the reduction of lipoyl substrates. It lacks one of two cysteine residues involved in dithiol-disulfide interchange with lipoyl substrates and a His-Glu pair involved in general acid catalysis.</text>
</comment>